<accession>A3PXV8</accession>
<name>RIMM_MYCSJ</name>
<keyword id="KW-0143">Chaperone</keyword>
<keyword id="KW-0963">Cytoplasm</keyword>
<keyword id="KW-0690">Ribosome biogenesis</keyword>
<keyword id="KW-0698">rRNA processing</keyword>
<reference key="1">
    <citation type="submission" date="2007-02" db="EMBL/GenBank/DDBJ databases">
        <title>Complete sequence of Mycobacterium sp. JLS.</title>
        <authorList>
            <consortium name="US DOE Joint Genome Institute"/>
            <person name="Copeland A."/>
            <person name="Lucas S."/>
            <person name="Lapidus A."/>
            <person name="Barry K."/>
            <person name="Detter J.C."/>
            <person name="Glavina del Rio T."/>
            <person name="Hammon N."/>
            <person name="Israni S."/>
            <person name="Dalin E."/>
            <person name="Tice H."/>
            <person name="Pitluck S."/>
            <person name="Chain P."/>
            <person name="Malfatti S."/>
            <person name="Shin M."/>
            <person name="Vergez L."/>
            <person name="Schmutz J."/>
            <person name="Larimer F."/>
            <person name="Land M."/>
            <person name="Hauser L."/>
            <person name="Kyrpides N."/>
            <person name="Mikhailova N."/>
            <person name="Miller C.D."/>
            <person name="Anderson A.J."/>
            <person name="Sims R.C."/>
            <person name="Richardson P."/>
        </authorList>
    </citation>
    <scope>NUCLEOTIDE SEQUENCE [LARGE SCALE GENOMIC DNA]</scope>
    <source>
        <strain>JLS</strain>
    </source>
</reference>
<gene>
    <name evidence="1" type="primary">rimM</name>
    <name type="ordered locus">Mjls_1947</name>
</gene>
<comment type="function">
    <text evidence="1">An accessory protein needed during the final step in the assembly of 30S ribosomal subunit, possibly for assembly of the head region. Essential for efficient processing of 16S rRNA. May be needed both before and after RbfA during the maturation of 16S rRNA. It has affinity for free ribosomal 30S subunits but not for 70S ribosomes.</text>
</comment>
<comment type="subunit">
    <text evidence="1">Binds ribosomal protein uS19.</text>
</comment>
<comment type="subcellular location">
    <subcellularLocation>
        <location evidence="1">Cytoplasm</location>
    </subcellularLocation>
</comment>
<comment type="domain">
    <text evidence="1">The PRC barrel domain binds ribosomal protein uS19.</text>
</comment>
<comment type="similarity">
    <text evidence="1">Belongs to the RimM family.</text>
</comment>
<evidence type="ECO:0000255" key="1">
    <source>
        <dbReference type="HAMAP-Rule" id="MF_00014"/>
    </source>
</evidence>
<proteinExistence type="inferred from homology"/>
<protein>
    <recommendedName>
        <fullName evidence="1">Ribosome maturation factor RimM</fullName>
    </recommendedName>
</protein>
<sequence length="173" mass="18382">MDLVIGRVAKAHGVTGELVVEVRTDDPDARFVPGARLRGRAPRGGAERAFVVESVRPHGGRLLLRLDGVADRTAADALRGTVFLVDSADLPPIEEPDEYYDHQLEGLLVRTVDGVDVGTVAEVLHTAAGELLSVKTPEGAEILVPFVTAIVPRVSLADGLVEIDPPEGLLDLE</sequence>
<organism>
    <name type="scientific">Mycobacterium sp. (strain JLS)</name>
    <dbReference type="NCBI Taxonomy" id="164757"/>
    <lineage>
        <taxon>Bacteria</taxon>
        <taxon>Bacillati</taxon>
        <taxon>Actinomycetota</taxon>
        <taxon>Actinomycetes</taxon>
        <taxon>Mycobacteriales</taxon>
        <taxon>Mycobacteriaceae</taxon>
        <taxon>Mycobacterium</taxon>
    </lineage>
</organism>
<feature type="chain" id="PRO_1000001198" description="Ribosome maturation factor RimM">
    <location>
        <begin position="1"/>
        <end position="173"/>
    </location>
</feature>
<feature type="domain" description="PRC barrel" evidence="1">
    <location>
        <begin position="96"/>
        <end position="169"/>
    </location>
</feature>
<dbReference type="EMBL" id="CP000580">
    <property type="protein sequence ID" value="ABN97735.1"/>
    <property type="molecule type" value="Genomic_DNA"/>
</dbReference>
<dbReference type="SMR" id="A3PXV8"/>
<dbReference type="KEGG" id="mjl:Mjls_1947"/>
<dbReference type="HOGENOM" id="CLU_077636_0_0_11"/>
<dbReference type="BioCyc" id="MSP164757:G1G8C-1967-MONOMER"/>
<dbReference type="GO" id="GO:0005737">
    <property type="term" value="C:cytoplasm"/>
    <property type="evidence" value="ECO:0007669"/>
    <property type="project" value="UniProtKB-SubCell"/>
</dbReference>
<dbReference type="GO" id="GO:0005840">
    <property type="term" value="C:ribosome"/>
    <property type="evidence" value="ECO:0007669"/>
    <property type="project" value="InterPro"/>
</dbReference>
<dbReference type="GO" id="GO:0043022">
    <property type="term" value="F:ribosome binding"/>
    <property type="evidence" value="ECO:0007669"/>
    <property type="project" value="InterPro"/>
</dbReference>
<dbReference type="GO" id="GO:0042274">
    <property type="term" value="P:ribosomal small subunit biogenesis"/>
    <property type="evidence" value="ECO:0007669"/>
    <property type="project" value="UniProtKB-UniRule"/>
</dbReference>
<dbReference type="GO" id="GO:0006364">
    <property type="term" value="P:rRNA processing"/>
    <property type="evidence" value="ECO:0007669"/>
    <property type="project" value="UniProtKB-UniRule"/>
</dbReference>
<dbReference type="Gene3D" id="2.30.30.240">
    <property type="entry name" value="PRC-barrel domain"/>
    <property type="match status" value="1"/>
</dbReference>
<dbReference type="Gene3D" id="2.40.30.60">
    <property type="entry name" value="RimM"/>
    <property type="match status" value="1"/>
</dbReference>
<dbReference type="HAMAP" id="MF_00014">
    <property type="entry name" value="Ribosome_mat_RimM"/>
    <property type="match status" value="1"/>
</dbReference>
<dbReference type="InterPro" id="IPR011033">
    <property type="entry name" value="PRC_barrel-like_sf"/>
</dbReference>
<dbReference type="InterPro" id="IPR056792">
    <property type="entry name" value="PRC_RimM"/>
</dbReference>
<dbReference type="InterPro" id="IPR011961">
    <property type="entry name" value="RimM"/>
</dbReference>
<dbReference type="InterPro" id="IPR002676">
    <property type="entry name" value="RimM_N"/>
</dbReference>
<dbReference type="InterPro" id="IPR036976">
    <property type="entry name" value="RimM_N_sf"/>
</dbReference>
<dbReference type="InterPro" id="IPR009000">
    <property type="entry name" value="Transl_B-barrel_sf"/>
</dbReference>
<dbReference type="NCBIfam" id="TIGR02273">
    <property type="entry name" value="16S_RimM"/>
    <property type="match status" value="1"/>
</dbReference>
<dbReference type="PANTHER" id="PTHR33692">
    <property type="entry name" value="RIBOSOME MATURATION FACTOR RIMM"/>
    <property type="match status" value="1"/>
</dbReference>
<dbReference type="PANTHER" id="PTHR33692:SF1">
    <property type="entry name" value="RIBOSOME MATURATION FACTOR RIMM"/>
    <property type="match status" value="1"/>
</dbReference>
<dbReference type="Pfam" id="PF24986">
    <property type="entry name" value="PRC_RimM"/>
    <property type="match status" value="1"/>
</dbReference>
<dbReference type="Pfam" id="PF01782">
    <property type="entry name" value="RimM"/>
    <property type="match status" value="1"/>
</dbReference>
<dbReference type="SUPFAM" id="SSF50346">
    <property type="entry name" value="PRC-barrel domain"/>
    <property type="match status" value="1"/>
</dbReference>
<dbReference type="SUPFAM" id="SSF50447">
    <property type="entry name" value="Translation proteins"/>
    <property type="match status" value="1"/>
</dbReference>